<keyword id="KW-0106">Calcium</keyword>
<keyword id="KW-1217">Cell adhesion impairing toxin</keyword>
<keyword id="KW-1015">Disulfide bond</keyword>
<keyword id="KW-1199">Hemostasis impairing toxin</keyword>
<keyword id="KW-0378">Hydrolase</keyword>
<keyword id="KW-0479">Metal-binding</keyword>
<keyword id="KW-0482">Metalloprotease</keyword>
<keyword id="KW-1201">Platelet aggregation inhibiting toxin</keyword>
<keyword id="KW-0645">Protease</keyword>
<keyword id="KW-0873">Pyrrolidone carboxylic acid</keyword>
<keyword id="KW-0964">Secreted</keyword>
<keyword id="KW-0732">Signal</keyword>
<keyword id="KW-0800">Toxin</keyword>
<keyword id="KW-0862">Zinc</keyword>
<keyword id="KW-0865">Zymogen</keyword>
<organism>
    <name type="scientific">Crotalus atrox</name>
    <name type="common">Western diamondback rattlesnake</name>
    <dbReference type="NCBI Taxonomy" id="8730"/>
    <lineage>
        <taxon>Eukaryota</taxon>
        <taxon>Metazoa</taxon>
        <taxon>Chordata</taxon>
        <taxon>Craniata</taxon>
        <taxon>Vertebrata</taxon>
        <taxon>Euteleostomi</taxon>
        <taxon>Lepidosauria</taxon>
        <taxon>Squamata</taxon>
        <taxon>Bifurcata</taxon>
        <taxon>Unidentata</taxon>
        <taxon>Episquamata</taxon>
        <taxon>Toxicofera</taxon>
        <taxon>Serpentes</taxon>
        <taxon>Colubroidea</taxon>
        <taxon>Viperidae</taxon>
        <taxon>Crotalinae</taxon>
        <taxon>Crotalus</taxon>
    </lineage>
</organism>
<name>VM2V2_CROAT</name>
<comment type="function">
    <text evidence="1">Snake venom zinc metalloproteinase that inhibits ADP-induced platelet aggregation (probably by binding integrin alpha-IIb/beta-3 (ITGA2B/ITGB3)) and degrades fibrinogen.</text>
</comment>
<comment type="cofactor">
    <cofactor evidence="1">
        <name>Zn(2+)</name>
        <dbReference type="ChEBI" id="CHEBI:29105"/>
    </cofactor>
    <text evidence="1">Binds 1 zinc ion per subunit.</text>
</comment>
<comment type="subunit">
    <text evidence="1">Monomer.</text>
</comment>
<comment type="subcellular location">
    <subcellularLocation>
        <location evidence="7">Secreted</location>
    </subcellularLocation>
</comment>
<comment type="tissue specificity">
    <text evidence="7">Expressed by the venom gland.</text>
</comment>
<comment type="miscellaneous">
    <text>The disintegrin belongs to the long disintegrin subfamily.</text>
</comment>
<comment type="similarity">
    <text evidence="6">Belongs to the venom metalloproteinase (M12B) family. P-II subfamily. P-IIb sub-subfamily.</text>
</comment>
<evidence type="ECO:0000250" key="1"/>
<evidence type="ECO:0000250" key="2">
    <source>
        <dbReference type="UniProtKB" id="Q0NZX5"/>
    </source>
</evidence>
<evidence type="ECO:0000255" key="3"/>
<evidence type="ECO:0000255" key="4">
    <source>
        <dbReference type="PROSITE-ProRule" id="PRU00068"/>
    </source>
</evidence>
<evidence type="ECO:0000255" key="5">
    <source>
        <dbReference type="PROSITE-ProRule" id="PRU00276"/>
    </source>
</evidence>
<evidence type="ECO:0000305" key="6"/>
<evidence type="ECO:0000305" key="7">
    <source>
    </source>
</evidence>
<feature type="signal peptide" evidence="3">
    <location>
        <begin position="1"/>
        <end position="20"/>
    </location>
</feature>
<feature type="propeptide" id="PRO_0000407410" evidence="1">
    <location>
        <begin position="21"/>
        <end position="190"/>
    </location>
</feature>
<feature type="chain" id="PRO_0000407411" description="Zinc metalloproteinase-disintegrin VMP-II">
    <location>
        <begin position="191"/>
        <end position="486"/>
    </location>
</feature>
<feature type="domain" description="Peptidase M12B" evidence="5">
    <location>
        <begin position="197"/>
        <end position="394"/>
    </location>
</feature>
<feature type="domain" description="Disintegrin" evidence="4">
    <location>
        <begin position="402"/>
        <end position="486"/>
    </location>
</feature>
<feature type="short sequence motif" description="Cell attachment site">
    <location>
        <begin position="464"/>
        <end position="466"/>
    </location>
</feature>
<feature type="active site" evidence="5">
    <location>
        <position position="334"/>
    </location>
</feature>
<feature type="binding site" evidence="1">
    <location>
        <position position="200"/>
    </location>
    <ligand>
        <name>Ca(2+)</name>
        <dbReference type="ChEBI" id="CHEBI:29108"/>
    </ligand>
</feature>
<feature type="binding site" evidence="1">
    <location>
        <position position="284"/>
    </location>
    <ligand>
        <name>Ca(2+)</name>
        <dbReference type="ChEBI" id="CHEBI:29108"/>
    </ligand>
</feature>
<feature type="binding site" evidence="5">
    <location>
        <position position="333"/>
    </location>
    <ligand>
        <name>Zn(2+)</name>
        <dbReference type="ChEBI" id="CHEBI:29105"/>
        <note>catalytic</note>
    </ligand>
</feature>
<feature type="binding site" evidence="5">
    <location>
        <position position="337"/>
    </location>
    <ligand>
        <name>Zn(2+)</name>
        <dbReference type="ChEBI" id="CHEBI:29105"/>
        <note>catalytic</note>
    </ligand>
</feature>
<feature type="binding site" evidence="5">
    <location>
        <position position="343"/>
    </location>
    <ligand>
        <name>Zn(2+)</name>
        <dbReference type="ChEBI" id="CHEBI:29105"/>
        <note>catalytic</note>
    </ligand>
</feature>
<feature type="binding site" evidence="1">
    <location>
        <position position="389"/>
    </location>
    <ligand>
        <name>Ca(2+)</name>
        <dbReference type="ChEBI" id="CHEBI:29108"/>
    </ligand>
</feature>
<feature type="binding site" evidence="1">
    <location>
        <position position="392"/>
    </location>
    <ligand>
        <name>Ca(2+)</name>
        <dbReference type="ChEBI" id="CHEBI:29108"/>
    </ligand>
</feature>
<feature type="modified residue" description="Pyrrolidone carboxylic acid" evidence="1">
    <location>
        <position position="191"/>
    </location>
</feature>
<feature type="disulfide bond" evidence="5">
    <location>
        <begin position="308"/>
        <end position="389"/>
    </location>
</feature>
<feature type="disulfide bond" evidence="5">
    <location>
        <begin position="348"/>
        <end position="372"/>
    </location>
</feature>
<feature type="disulfide bond" evidence="5">
    <location>
        <begin position="350"/>
        <end position="355"/>
    </location>
</feature>
<feature type="disulfide bond" evidence="6">
    <location>
        <begin position="405"/>
        <end position="424"/>
    </location>
</feature>
<feature type="disulfide bond" evidence="2">
    <location>
        <begin position="416"/>
        <end position="434"/>
    </location>
</feature>
<feature type="disulfide bond" evidence="2">
    <location>
        <begin position="418"/>
        <end position="429"/>
    </location>
</feature>
<feature type="disulfide bond" evidence="2">
    <location>
        <begin position="428"/>
        <end position="451"/>
    </location>
</feature>
<feature type="disulfide bond" evidence="2">
    <location>
        <begin position="442"/>
        <end position="448"/>
    </location>
</feature>
<feature type="disulfide bond" evidence="2">
    <location>
        <begin position="447"/>
        <end position="472"/>
    </location>
</feature>
<feature type="disulfide bond" evidence="2 4">
    <location>
        <begin position="460"/>
        <end position="479"/>
    </location>
</feature>
<proteinExistence type="evidence at transcript level"/>
<protein>
    <recommendedName>
        <fullName>Zinc metalloproteinase-disintegrin VMP-II</fullName>
        <shortName>CaVMP-II</shortName>
        <ecNumber>3.4.24.-</ecNumber>
    </recommendedName>
    <alternativeName>
        <fullName>Snake venom metalloproteinase</fullName>
        <shortName>SVMP</shortName>
    </alternativeName>
</protein>
<reference key="1">
    <citation type="journal article" date="2010" name="Toxicon">
        <title>Molecular cloning and characterization of cDNAs encoding metalloproteinases from snake venom glands.</title>
        <authorList>
            <person name="Jia Y."/>
            <person name="Perez J.C."/>
        </authorList>
    </citation>
    <scope>NUCLEOTIDE SEQUENCE [MRNA]</scope>
    <source>
        <tissue>Venom gland</tissue>
    </source>
</reference>
<accession>C9E1R7</accession>
<dbReference type="EC" id="3.4.24.-"/>
<dbReference type="EMBL" id="GQ451438">
    <property type="protein sequence ID" value="ACV83932.1"/>
    <property type="molecule type" value="mRNA"/>
</dbReference>
<dbReference type="SMR" id="C9E1R7"/>
<dbReference type="MEROPS" id="M12.313"/>
<dbReference type="BRENDA" id="3.4.24.1">
    <property type="organism ID" value="1710"/>
</dbReference>
<dbReference type="GO" id="GO:0005576">
    <property type="term" value="C:extracellular region"/>
    <property type="evidence" value="ECO:0007669"/>
    <property type="project" value="UniProtKB-SubCell"/>
</dbReference>
<dbReference type="GO" id="GO:0005886">
    <property type="term" value="C:plasma membrane"/>
    <property type="evidence" value="ECO:0007669"/>
    <property type="project" value="TreeGrafter"/>
</dbReference>
<dbReference type="GO" id="GO:0046872">
    <property type="term" value="F:metal ion binding"/>
    <property type="evidence" value="ECO:0007669"/>
    <property type="project" value="UniProtKB-KW"/>
</dbReference>
<dbReference type="GO" id="GO:0004222">
    <property type="term" value="F:metalloendopeptidase activity"/>
    <property type="evidence" value="ECO:0007669"/>
    <property type="project" value="InterPro"/>
</dbReference>
<dbReference type="GO" id="GO:0090729">
    <property type="term" value="F:toxin activity"/>
    <property type="evidence" value="ECO:0007669"/>
    <property type="project" value="UniProtKB-KW"/>
</dbReference>
<dbReference type="GO" id="GO:0006508">
    <property type="term" value="P:proteolysis"/>
    <property type="evidence" value="ECO:0007669"/>
    <property type="project" value="UniProtKB-KW"/>
</dbReference>
<dbReference type="CDD" id="cd04269">
    <property type="entry name" value="ZnMc_adamalysin_II_like"/>
    <property type="match status" value="1"/>
</dbReference>
<dbReference type="FunFam" id="4.10.70.10:FF:000003">
    <property type="entry name" value="Disintegrin and metalloproteinase domain-containing protein 17"/>
    <property type="match status" value="1"/>
</dbReference>
<dbReference type="FunFam" id="3.40.390.10:FF:000002">
    <property type="entry name" value="Disintegrin and metalloproteinase domain-containing protein 22"/>
    <property type="match status" value="1"/>
</dbReference>
<dbReference type="Gene3D" id="3.40.390.10">
    <property type="entry name" value="Collagenase (Catalytic Domain)"/>
    <property type="match status" value="1"/>
</dbReference>
<dbReference type="Gene3D" id="4.10.70.10">
    <property type="entry name" value="Disintegrin domain"/>
    <property type="match status" value="1"/>
</dbReference>
<dbReference type="InterPro" id="IPR018358">
    <property type="entry name" value="Disintegrin_CS"/>
</dbReference>
<dbReference type="InterPro" id="IPR001762">
    <property type="entry name" value="Disintegrin_dom"/>
</dbReference>
<dbReference type="InterPro" id="IPR036436">
    <property type="entry name" value="Disintegrin_dom_sf"/>
</dbReference>
<dbReference type="InterPro" id="IPR024079">
    <property type="entry name" value="MetalloPept_cat_dom_sf"/>
</dbReference>
<dbReference type="InterPro" id="IPR001590">
    <property type="entry name" value="Peptidase_M12B"/>
</dbReference>
<dbReference type="InterPro" id="IPR002870">
    <property type="entry name" value="Peptidase_M12B_N"/>
</dbReference>
<dbReference type="InterPro" id="IPR034027">
    <property type="entry name" value="Reprolysin_adamalysin"/>
</dbReference>
<dbReference type="PANTHER" id="PTHR11905">
    <property type="entry name" value="ADAM A DISINTEGRIN AND METALLOPROTEASE DOMAIN"/>
    <property type="match status" value="1"/>
</dbReference>
<dbReference type="PANTHER" id="PTHR11905:SF32">
    <property type="entry name" value="DISINTEGRIN AND METALLOPROTEINASE DOMAIN-CONTAINING PROTEIN 28"/>
    <property type="match status" value="1"/>
</dbReference>
<dbReference type="Pfam" id="PF00200">
    <property type="entry name" value="Disintegrin"/>
    <property type="match status" value="1"/>
</dbReference>
<dbReference type="Pfam" id="PF01562">
    <property type="entry name" value="Pep_M12B_propep"/>
    <property type="match status" value="1"/>
</dbReference>
<dbReference type="Pfam" id="PF01421">
    <property type="entry name" value="Reprolysin"/>
    <property type="match status" value="1"/>
</dbReference>
<dbReference type="PRINTS" id="PR00289">
    <property type="entry name" value="DISINTEGRIN"/>
</dbReference>
<dbReference type="SMART" id="SM00050">
    <property type="entry name" value="DISIN"/>
    <property type="match status" value="1"/>
</dbReference>
<dbReference type="SUPFAM" id="SSF57552">
    <property type="entry name" value="Blood coagulation inhibitor (disintegrin)"/>
    <property type="match status" value="1"/>
</dbReference>
<dbReference type="SUPFAM" id="SSF55486">
    <property type="entry name" value="Metalloproteases ('zincins'), catalytic domain"/>
    <property type="match status" value="1"/>
</dbReference>
<dbReference type="PROSITE" id="PS50215">
    <property type="entry name" value="ADAM_MEPRO"/>
    <property type="match status" value="1"/>
</dbReference>
<dbReference type="PROSITE" id="PS00427">
    <property type="entry name" value="DISINTEGRIN_1"/>
    <property type="match status" value="1"/>
</dbReference>
<dbReference type="PROSITE" id="PS50214">
    <property type="entry name" value="DISINTEGRIN_2"/>
    <property type="match status" value="1"/>
</dbReference>
<sequence>MIQVLLVTICLAVFPYQGSSIILESGNVNDYEVVYPRKVTALPKGAVQQKYEDAMQYEFKVNGEPVVLHLEKNKELFSEDYSETHYSPDGREITTYPLVEDHCYYHGRIENDADSTASISACNGLKGHFKLQGEMYLIEPLELSDSEAHAVYKYENVEKEDEAPKMCGVTQNWESHEPIKKASQSNLPPEQEELLKRYIELVVVADHRMYTIYDGDKTEISSIIYEIVNILTQIFRPLHIRVALIGLEIWSSGELSKVTLSADDTLEAFGEWRETVLMNRKRHDHAQLLTGMIFSGTIEGRTYKSRMCDPKHSVGIVRDHRTRRHFVANRMAHELGHNLGIDHDRDSCSCGANSCIMSATVSNEPSSQFSDCSLNQYLKHIIHYHYTTCLYNEPSKTDIVSPPVCGNYYTEVGEDCDCGPPANCQNPCCDAATCKVTTGSQCAEGLCCDQCKFMKEGTVCRVARGDWNNDICTGQSAECPNKGYYG</sequence>